<reference key="1">
    <citation type="journal article" date="2005" name="Nat. Biotechnol.">
        <title>The genome sequence of the ethanologenic bacterium Zymomonas mobilis ZM4.</title>
        <authorList>
            <person name="Seo J.-S."/>
            <person name="Chong H."/>
            <person name="Park H.S."/>
            <person name="Yoon K.-O."/>
            <person name="Jung C."/>
            <person name="Kim J.J."/>
            <person name="Hong J.H."/>
            <person name="Kim H."/>
            <person name="Kim J.-H."/>
            <person name="Kil J.-I."/>
            <person name="Park C.J."/>
            <person name="Oh H.-M."/>
            <person name="Lee J.-S."/>
            <person name="Jin S.-J."/>
            <person name="Um H.-W."/>
            <person name="Lee H.-J."/>
            <person name="Oh S.-J."/>
            <person name="Kim J.Y."/>
            <person name="Kang H.L."/>
            <person name="Lee S.Y."/>
            <person name="Lee K.J."/>
            <person name="Kang H.S."/>
        </authorList>
    </citation>
    <scope>NUCLEOTIDE SEQUENCE [LARGE SCALE GENOMIC DNA]</scope>
    <source>
        <strain>ATCC 31821 / ZM4 / CP4</strain>
    </source>
</reference>
<accession>Q5NL76</accession>
<feature type="chain" id="PRO_0000181623" description="Large ribosomal subunit protein bL25">
    <location>
        <begin position="1"/>
        <end position="220"/>
    </location>
</feature>
<sequence>MSDTLNLLAKKRDRAGKGASRAIRREGLVPAVIYGDKTPAMGITVDHIALFKMLNTGHFMNSVVTIDVDGQKLPTIPKDVQFHPVTDRVLHVDFLRVSANSLVEVAIPVSYVDEEKSPGIKLGGVLNIIHHELKLKVKATAIPEEIVVSVAGLEVGDSIHLNQIKLPEGAELAHDEHESTAATVIAPSGMKSNADDEADAALAAAASAASAEKKEAEKSE</sequence>
<protein>
    <recommendedName>
        <fullName evidence="1">Large ribosomal subunit protein bL25</fullName>
    </recommendedName>
    <alternativeName>
        <fullName evidence="2">50S ribosomal protein L25</fullName>
    </alternativeName>
    <alternativeName>
        <fullName evidence="1">General stress protein CTC</fullName>
    </alternativeName>
</protein>
<dbReference type="EMBL" id="AE008692">
    <property type="protein sequence ID" value="AAV90534.1"/>
    <property type="molecule type" value="Genomic_DNA"/>
</dbReference>
<dbReference type="RefSeq" id="WP_011241635.1">
    <property type="nucleotide sequence ID" value="NZ_CP035711.1"/>
</dbReference>
<dbReference type="SMR" id="Q5NL76"/>
<dbReference type="STRING" id="264203.ZMO1910"/>
<dbReference type="KEGG" id="zmo:ZMO1910"/>
<dbReference type="eggNOG" id="COG1825">
    <property type="taxonomic scope" value="Bacteria"/>
</dbReference>
<dbReference type="HOGENOM" id="CLU_075939_0_0_5"/>
<dbReference type="Proteomes" id="UP000001173">
    <property type="component" value="Chromosome"/>
</dbReference>
<dbReference type="GO" id="GO:0022625">
    <property type="term" value="C:cytosolic large ribosomal subunit"/>
    <property type="evidence" value="ECO:0007669"/>
    <property type="project" value="TreeGrafter"/>
</dbReference>
<dbReference type="GO" id="GO:0008097">
    <property type="term" value="F:5S rRNA binding"/>
    <property type="evidence" value="ECO:0007669"/>
    <property type="project" value="InterPro"/>
</dbReference>
<dbReference type="GO" id="GO:0003735">
    <property type="term" value="F:structural constituent of ribosome"/>
    <property type="evidence" value="ECO:0007669"/>
    <property type="project" value="InterPro"/>
</dbReference>
<dbReference type="GO" id="GO:0006412">
    <property type="term" value="P:translation"/>
    <property type="evidence" value="ECO:0007669"/>
    <property type="project" value="UniProtKB-UniRule"/>
</dbReference>
<dbReference type="CDD" id="cd00495">
    <property type="entry name" value="Ribosomal_L25_TL5_CTC"/>
    <property type="match status" value="1"/>
</dbReference>
<dbReference type="Gene3D" id="2.170.120.20">
    <property type="entry name" value="Ribosomal protein L25, beta domain"/>
    <property type="match status" value="1"/>
</dbReference>
<dbReference type="Gene3D" id="2.40.240.10">
    <property type="entry name" value="Ribosomal Protein L25, Chain P"/>
    <property type="match status" value="1"/>
</dbReference>
<dbReference type="HAMAP" id="MF_01334">
    <property type="entry name" value="Ribosomal_bL25_CTC"/>
    <property type="match status" value="1"/>
</dbReference>
<dbReference type="InterPro" id="IPR020056">
    <property type="entry name" value="Rbsml_bL25/Gln-tRNA_synth_N"/>
</dbReference>
<dbReference type="InterPro" id="IPR011035">
    <property type="entry name" value="Ribosomal_bL25/Gln-tRNA_synth"/>
</dbReference>
<dbReference type="InterPro" id="IPR020057">
    <property type="entry name" value="Ribosomal_bL25_b-dom"/>
</dbReference>
<dbReference type="InterPro" id="IPR037121">
    <property type="entry name" value="Ribosomal_bL25_C"/>
</dbReference>
<dbReference type="InterPro" id="IPR001021">
    <property type="entry name" value="Ribosomal_bL25_long"/>
</dbReference>
<dbReference type="InterPro" id="IPR029751">
    <property type="entry name" value="Ribosomal_L25_dom"/>
</dbReference>
<dbReference type="InterPro" id="IPR020930">
    <property type="entry name" value="Ribosomal_uL5_bac-type"/>
</dbReference>
<dbReference type="NCBIfam" id="TIGR00731">
    <property type="entry name" value="bL25_bact_ctc"/>
    <property type="match status" value="1"/>
</dbReference>
<dbReference type="NCBIfam" id="NF004128">
    <property type="entry name" value="PRK05618.1-2"/>
    <property type="match status" value="1"/>
</dbReference>
<dbReference type="NCBIfam" id="NF004612">
    <property type="entry name" value="PRK05943.1"/>
    <property type="match status" value="1"/>
</dbReference>
<dbReference type="PANTHER" id="PTHR33284">
    <property type="entry name" value="RIBOSOMAL PROTEIN L25/GLN-TRNA SYNTHETASE, ANTI-CODON-BINDING DOMAIN-CONTAINING PROTEIN"/>
    <property type="match status" value="1"/>
</dbReference>
<dbReference type="PANTHER" id="PTHR33284:SF1">
    <property type="entry name" value="RIBOSOMAL PROTEIN L25_GLN-TRNA SYNTHETASE, ANTI-CODON-BINDING DOMAIN-CONTAINING PROTEIN"/>
    <property type="match status" value="1"/>
</dbReference>
<dbReference type="Pfam" id="PF01386">
    <property type="entry name" value="Ribosomal_L25p"/>
    <property type="match status" value="1"/>
</dbReference>
<dbReference type="Pfam" id="PF14693">
    <property type="entry name" value="Ribosomal_TL5_C"/>
    <property type="match status" value="1"/>
</dbReference>
<dbReference type="SUPFAM" id="SSF50715">
    <property type="entry name" value="Ribosomal protein L25-like"/>
    <property type="match status" value="1"/>
</dbReference>
<gene>
    <name evidence="1" type="primary">rplY</name>
    <name evidence="1" type="synonym">ctc</name>
    <name type="ordered locus">ZMO1910</name>
</gene>
<keyword id="KW-1185">Reference proteome</keyword>
<keyword id="KW-0687">Ribonucleoprotein</keyword>
<keyword id="KW-0689">Ribosomal protein</keyword>
<keyword id="KW-0694">RNA-binding</keyword>
<keyword id="KW-0699">rRNA-binding</keyword>
<organism>
    <name type="scientific">Zymomonas mobilis subsp. mobilis (strain ATCC 31821 / ZM4 / CP4)</name>
    <dbReference type="NCBI Taxonomy" id="264203"/>
    <lineage>
        <taxon>Bacteria</taxon>
        <taxon>Pseudomonadati</taxon>
        <taxon>Pseudomonadota</taxon>
        <taxon>Alphaproteobacteria</taxon>
        <taxon>Sphingomonadales</taxon>
        <taxon>Zymomonadaceae</taxon>
        <taxon>Zymomonas</taxon>
    </lineage>
</organism>
<comment type="function">
    <text evidence="1">This is one of the proteins that binds to the 5S RNA in the ribosome where it forms part of the central protuberance.</text>
</comment>
<comment type="subunit">
    <text evidence="1">Part of the 50S ribosomal subunit; part of the 5S rRNA/L5/L18/L25 subcomplex. Contacts the 5S rRNA. Binds to the 5S rRNA independently of L5 and L18.</text>
</comment>
<comment type="similarity">
    <text evidence="1">Belongs to the bacterial ribosomal protein bL25 family. CTC subfamily.</text>
</comment>
<evidence type="ECO:0000255" key="1">
    <source>
        <dbReference type="HAMAP-Rule" id="MF_01334"/>
    </source>
</evidence>
<evidence type="ECO:0000305" key="2"/>
<proteinExistence type="inferred from homology"/>
<name>RL25_ZYMMO</name>